<keyword id="KW-0472">Membrane</keyword>
<keyword id="KW-1185">Reference proteome</keyword>
<keyword id="KW-0812">Transmembrane</keyword>
<keyword id="KW-1133">Transmembrane helix</keyword>
<proteinExistence type="evidence at transcript level"/>
<sequence length="253" mass="27935">MAHYKVEQDDWLTVYLKYLLFIFNFFFWVGGAAVMAVGVWTLVEKSGYLGVLASSTFAASAYILIFAGALVMVTGFLGFGAVIREDRGCLSAYFCLLLAIFLVELVAGVLAHVYYQRLSDELKQHLTRTLAENYRQPGAAEITASVDRLQQDFKCCGSNSSADWLQSSYILSPEAEGRRVPDSCCKTVVARCGQRAHPSNIYKVEGGCISKLEQFLADHLLLMGAVGIGVACLQICGMILTCGLHRRLQLHFY</sequence>
<accession>Q0VC33</accession>
<organism>
    <name type="scientific">Bos taurus</name>
    <name type="common">Bovine</name>
    <dbReference type="NCBI Taxonomy" id="9913"/>
    <lineage>
        <taxon>Eukaryota</taxon>
        <taxon>Metazoa</taxon>
        <taxon>Chordata</taxon>
        <taxon>Craniata</taxon>
        <taxon>Vertebrata</taxon>
        <taxon>Euteleostomi</taxon>
        <taxon>Mammalia</taxon>
        <taxon>Eutheria</taxon>
        <taxon>Laurasiatheria</taxon>
        <taxon>Artiodactyla</taxon>
        <taxon>Ruminantia</taxon>
        <taxon>Pecora</taxon>
        <taxon>Bovidae</taxon>
        <taxon>Bovinae</taxon>
        <taxon>Bos</taxon>
    </lineage>
</organism>
<dbReference type="EMBL" id="BC120376">
    <property type="protein sequence ID" value="AAI20377.1"/>
    <property type="molecule type" value="mRNA"/>
</dbReference>
<dbReference type="RefSeq" id="NP_001073794.1">
    <property type="nucleotide sequence ID" value="NM_001080325.1"/>
</dbReference>
<dbReference type="RefSeq" id="XP_005207259.1">
    <property type="nucleotide sequence ID" value="XM_005207202.5"/>
</dbReference>
<dbReference type="SMR" id="Q0VC33"/>
<dbReference type="FunCoup" id="Q0VC33">
    <property type="interactions" value="179"/>
</dbReference>
<dbReference type="STRING" id="9913.ENSBTAP00000065960"/>
<dbReference type="PaxDb" id="9913-ENSBTAP00000040448"/>
<dbReference type="Ensembl" id="ENSBTAT00000042839.3">
    <property type="protein sequence ID" value="ENSBTAP00000040448.3"/>
    <property type="gene ID" value="ENSBTAG00000020699.6"/>
</dbReference>
<dbReference type="GeneID" id="616660"/>
<dbReference type="KEGG" id="bta:616660"/>
<dbReference type="CTD" id="441631"/>
<dbReference type="VEuPathDB" id="HostDB:ENSBTAG00000020699"/>
<dbReference type="VGNC" id="VGNC:36426">
    <property type="gene designation" value="TSPAN11"/>
</dbReference>
<dbReference type="eggNOG" id="KOG3882">
    <property type="taxonomic scope" value="Eukaryota"/>
</dbReference>
<dbReference type="GeneTree" id="ENSGT00940000161249"/>
<dbReference type="HOGENOM" id="CLU_055524_5_0_1"/>
<dbReference type="InParanoid" id="Q0VC33"/>
<dbReference type="OMA" id="HCGQRAH"/>
<dbReference type="OrthoDB" id="438211at2759"/>
<dbReference type="TreeFam" id="TF352892"/>
<dbReference type="Proteomes" id="UP000009136">
    <property type="component" value="Chromosome 5"/>
</dbReference>
<dbReference type="Bgee" id="ENSBTAG00000020699">
    <property type="expression patterns" value="Expressed in uterine cervix and 96 other cell types or tissues"/>
</dbReference>
<dbReference type="GO" id="GO:0005886">
    <property type="term" value="C:plasma membrane"/>
    <property type="evidence" value="ECO:0000318"/>
    <property type="project" value="GO_Central"/>
</dbReference>
<dbReference type="CDD" id="cd03155">
    <property type="entry name" value="CD151_like_LEL"/>
    <property type="match status" value="1"/>
</dbReference>
<dbReference type="FunFam" id="1.10.1450.10:FF:000005">
    <property type="entry name" value="Tetraspanin"/>
    <property type="match status" value="1"/>
</dbReference>
<dbReference type="Gene3D" id="1.10.1450.10">
    <property type="entry name" value="Tetraspanin"/>
    <property type="match status" value="1"/>
</dbReference>
<dbReference type="InterPro" id="IPR018499">
    <property type="entry name" value="Tetraspanin/Peripherin"/>
</dbReference>
<dbReference type="InterPro" id="IPR000301">
    <property type="entry name" value="Tetraspanin_animals"/>
</dbReference>
<dbReference type="InterPro" id="IPR008952">
    <property type="entry name" value="Tetraspanin_EC2_sf"/>
</dbReference>
<dbReference type="PANTHER" id="PTHR19282">
    <property type="entry name" value="TETRASPANIN"/>
    <property type="match status" value="1"/>
</dbReference>
<dbReference type="PANTHER" id="PTHR19282:SF198">
    <property type="entry name" value="TETRASPANIN-11"/>
    <property type="match status" value="1"/>
</dbReference>
<dbReference type="Pfam" id="PF00335">
    <property type="entry name" value="Tetraspanin"/>
    <property type="match status" value="1"/>
</dbReference>
<dbReference type="PIRSF" id="PIRSF002419">
    <property type="entry name" value="Tetraspanin"/>
    <property type="match status" value="1"/>
</dbReference>
<dbReference type="PRINTS" id="PR00259">
    <property type="entry name" value="TMFOUR"/>
</dbReference>
<dbReference type="SUPFAM" id="SSF48652">
    <property type="entry name" value="Tetraspanin"/>
    <property type="match status" value="1"/>
</dbReference>
<comment type="subcellular location">
    <subcellularLocation>
        <location evidence="2">Membrane</location>
        <topology evidence="2">Multi-pass membrane protein</topology>
    </subcellularLocation>
</comment>
<comment type="similarity">
    <text evidence="2">Belongs to the tetraspanin (TM4SF) family.</text>
</comment>
<protein>
    <recommendedName>
        <fullName>Tetraspanin-11</fullName>
        <shortName>Tspan-11</shortName>
    </recommendedName>
</protein>
<evidence type="ECO:0000255" key="1"/>
<evidence type="ECO:0000305" key="2"/>
<name>TSN11_BOVIN</name>
<gene>
    <name type="primary">TSPAN11</name>
</gene>
<feature type="chain" id="PRO_0000311904" description="Tetraspanin-11">
    <location>
        <begin position="1"/>
        <end position="253"/>
    </location>
</feature>
<feature type="transmembrane region" description="Helical" evidence="1">
    <location>
        <begin position="19"/>
        <end position="39"/>
    </location>
</feature>
<feature type="transmembrane region" description="Helical" evidence="1">
    <location>
        <begin position="63"/>
        <end position="83"/>
    </location>
</feature>
<feature type="transmembrane region" description="Helical" evidence="1">
    <location>
        <begin position="90"/>
        <end position="110"/>
    </location>
</feature>
<feature type="transmembrane region" description="Helical" evidence="1">
    <location>
        <begin position="220"/>
        <end position="240"/>
    </location>
</feature>
<reference key="1">
    <citation type="submission" date="2006-08" db="EMBL/GenBank/DDBJ databases">
        <authorList>
            <consortium name="NIH - Mammalian Gene Collection (MGC) project"/>
        </authorList>
    </citation>
    <scope>NUCLEOTIDE SEQUENCE [LARGE SCALE MRNA]</scope>
    <source>
        <strain>Hereford</strain>
        <tissue>Fetal skin</tissue>
    </source>
</reference>